<evidence type="ECO:0000269" key="1">
    <source>
    </source>
</evidence>
<evidence type="ECO:0000269" key="2">
    <source>
    </source>
</evidence>
<evidence type="ECO:0000269" key="3">
    <source>
    </source>
</evidence>
<evidence type="ECO:0000269" key="4">
    <source>
    </source>
</evidence>
<evidence type="ECO:0000303" key="5">
    <source>
    </source>
</evidence>
<evidence type="ECO:0000305" key="6"/>
<evidence type="ECO:0000305" key="7">
    <source>
    </source>
</evidence>
<reference key="1">
    <citation type="journal article" date="2010" name="Chem. Biol.">
        <title>Identification of the viridicatumtoxin and griseofulvin gene clusters from Penicillium aethiopicum.</title>
        <authorList>
            <person name="Chooi Y.H."/>
            <person name="Cacho R."/>
            <person name="Tang Y."/>
        </authorList>
    </citation>
    <scope>NUCLEOTIDE SEQUENCE [GENOMIC DNA]</scope>
    <scope>FUNCTION</scope>
    <source>
        <strain>IBT 5753</strain>
    </source>
</reference>
<reference key="2">
    <citation type="journal article" date="2008" name="J. Antibiot.">
        <title>Viridicatumtoxin B, a new anti-MRSA agent from Penicillium sp. FR11.</title>
        <authorList>
            <person name="Zheng C.J."/>
            <person name="Yu H.E."/>
            <person name="Kim E.H."/>
            <person name="Kim W.G."/>
        </authorList>
    </citation>
    <scope>BIOTECHNOLOGY</scope>
</reference>
<reference key="3">
    <citation type="journal article" date="2013" name="J. Am. Chem. Soc.">
        <title>A cytochrome P450 serves as an unexpected terpene cyclase during fungal meroterpenoid biosynthesis.</title>
        <authorList>
            <person name="Chooi Y.H."/>
            <person name="Hong Y.J."/>
            <person name="Cacho R.A."/>
            <person name="Tantillo D.J."/>
            <person name="Tang Y."/>
        </authorList>
    </citation>
    <scope>FUNCTION</scope>
</reference>
<reference key="4">
    <citation type="journal article" date="2016" name="J. Antibiot.">
        <title>Inhibition of bacterial undecaprenyl pyrophosphate synthase by small fungal molecules.</title>
        <authorList>
            <person name="Inokoshi J."/>
            <person name="Nakamura Y."/>
            <person name="Komada S."/>
            <person name="Komatsu K."/>
            <person name="Umeyama H."/>
            <person name="Tomoda H."/>
        </authorList>
    </citation>
    <scope>BIOTECHNOLOGY</scope>
</reference>
<gene>
    <name evidence="5" type="primary">vrtC</name>
</gene>
<accession>D7PHZ4</accession>
<organism>
    <name type="scientific">Penicillium aethiopicum</name>
    <dbReference type="NCBI Taxonomy" id="36650"/>
    <lineage>
        <taxon>Eukaryota</taxon>
        <taxon>Fungi</taxon>
        <taxon>Dikarya</taxon>
        <taxon>Ascomycota</taxon>
        <taxon>Pezizomycotina</taxon>
        <taxon>Eurotiomycetes</taxon>
        <taxon>Eurotiomycetidae</taxon>
        <taxon>Eurotiales</taxon>
        <taxon>Aspergillaceae</taxon>
        <taxon>Penicillium</taxon>
    </lineage>
</organism>
<keyword id="KW-0808">Transferase</keyword>
<comment type="function">
    <text evidence="2 3">Prenyltransferase; part of the gene cluster that mediates the biosynthesis of viridicatumtoxin, a tetracycline-like fungal meroterpenoid with a unique, fused spirobicyclic ring system (PubMed:20534346). The first step of the pathway is the production of the malonamoyl-CoA starter unit for the polyketide synthase vrtA (PubMed:20534346). The aldolase vrtJ may be involved in the synthesis of the malonamate substrate for malonamoyl-CoA synthetase vrtB (PubMed:20534346). The polyketide synthase vrtA then may utilize the malonamoyl-CoA starter unit, followed by sequential condensation of eight malonyl-CoA units to form the polyketide backbone (PubMed:20534346). The cyclization of the last ring could be mediated by the lactamase-like protein vrtG (PubMed:20534346). The proposed post-PKS tailoring steps are a hydroxylation at C5 catalyzed the cytochrome P450 monooxygenase vrtE, a hydroxylation at C12a catalyzed by VrtH and/or VrtI, and an O-methylation by the O-methyltransferase vrtF (PubMed:20534346, PubMed:24161266). VrtC is then proposed to catalyze the transfer of a geranyl group synthesized by vrtD to the aromatic C ring of the tetracyclic polyketide intermediate of viridicatumtoxin to yield previridicatumtoxin (PubMed:20534346). Finally, the cytochrome P450 monooxygenase vrtK catalyzes the spirocyclization of the geranyl moiety of previridicatumtoxin to afford viridicatumtoxin (PubMed:24161266).</text>
</comment>
<comment type="pathway">
    <text evidence="2">Secondary metabolite biosynthesis; terpenoid biosynthesis.</text>
</comment>
<comment type="biotechnology">
    <text evidence="1 4">Viridicatumtoxin and its derivative, viridicatumtoxin B, exhibit anti-methicillin-resistant Staphylococcus aureus (anti-MRSA) activity (PubMed:19168978). Moreover, viridicatumtoxin and a C2 acetyl analog, spirohexaline, have been demonstrated to inhibit bacterial undecaprenyl diphosphate synthase, a potential new target for antibiotic development (PubMed:27049441).</text>
</comment>
<comment type="similarity">
    <text evidence="6">Belongs to the tryptophan dimethylallyltransferase family.</text>
</comment>
<protein>
    <recommendedName>
        <fullName evidence="5">Prenyltransferase vrtC</fullName>
        <ecNumber evidence="7">2.5.1.-</ecNumber>
    </recommendedName>
    <alternativeName>
        <fullName evidence="5">Viridicatumtoxin synthesis protein C</fullName>
    </alternativeName>
</protein>
<name>VRTC_PENAE</name>
<sequence length="483" mass="53237">MGDATATEVFPVMDSIAVAMGDVESQLRVFHNVSRFLPTDDANQVFWWRTTGRHFAIMMHEARYSEARQVELLLFYRFVIAPRLGPRPTSATPWFHSRVAPGIGDGSPIGYSWRWGTGPDTKPLIRHYIEAIGPLTGTTADPLNEFAAKEMLYQLGQLVPGVELPLAWKFAAHIRPSLTDEPTRAVAGSSILIGLQCAPESAGIEVMAGLMTRSPAQVPELLHSIFPRAMRDAYGPDASLDGLNMVRDFVCHDPQGQYLTILGTTAIDCCAAASSRFKVYVTTTNTSFAHLAAVMTLGGRKPEAPESLTQLQELWYALKGLDPEFPVTAEPLSSVCGAANGTASGNPNANVSGVTFYFDIHPKYPFPHIKLQVDISKHTISDLGAINAVTEFLARRGQAADAQAYLNVVRAMVPDEELRTRRGLQAFFAFAFKNGAVDITSYFLPQIYRRYAEVQAELEPRKDCQGRSELSSKLQRRSRFDSY</sequence>
<proteinExistence type="evidence at protein level"/>
<dbReference type="EC" id="2.5.1.-" evidence="7"/>
<dbReference type="EMBL" id="GU574477">
    <property type="protein sequence ID" value="ADI24928.1"/>
    <property type="molecule type" value="Genomic_DNA"/>
</dbReference>
<dbReference type="SMR" id="D7PHZ4"/>
<dbReference type="BioCyc" id="MetaCyc:MONOMER-19282"/>
<dbReference type="UniPathway" id="UPA00213"/>
<dbReference type="GO" id="GO:0004659">
    <property type="term" value="F:prenyltransferase activity"/>
    <property type="evidence" value="ECO:0007669"/>
    <property type="project" value="TreeGrafter"/>
</dbReference>
<dbReference type="GO" id="GO:0009820">
    <property type="term" value="P:alkaloid metabolic process"/>
    <property type="evidence" value="ECO:0007669"/>
    <property type="project" value="InterPro"/>
</dbReference>
<dbReference type="GO" id="GO:0016114">
    <property type="term" value="P:terpenoid biosynthetic process"/>
    <property type="evidence" value="ECO:0007669"/>
    <property type="project" value="UniProtKB-UniPathway"/>
</dbReference>
<dbReference type="GO" id="GO:0140872">
    <property type="term" value="P:viridicatumtoxin biosynthetic process"/>
    <property type="evidence" value="ECO:0000304"/>
    <property type="project" value="GO_Central"/>
</dbReference>
<dbReference type="CDD" id="cd13929">
    <property type="entry name" value="PT-DMATS_CymD"/>
    <property type="match status" value="1"/>
</dbReference>
<dbReference type="InterPro" id="IPR017795">
    <property type="entry name" value="Aro_prenylTrfase_DMATS"/>
</dbReference>
<dbReference type="NCBIfam" id="TIGR03429">
    <property type="entry name" value="arom_pren_DMATS"/>
    <property type="match status" value="1"/>
</dbReference>
<dbReference type="PANTHER" id="PTHR40627">
    <property type="entry name" value="INDOLE PRENYLTRANSFERASE TDIB-RELATED"/>
    <property type="match status" value="1"/>
</dbReference>
<dbReference type="PANTHER" id="PTHR40627:SF4">
    <property type="entry name" value="PRENYLTRANSFERASE ASQH1-RELATED"/>
    <property type="match status" value="1"/>
</dbReference>
<dbReference type="Pfam" id="PF11991">
    <property type="entry name" value="Trp_DMAT"/>
    <property type="match status" value="1"/>
</dbReference>
<feature type="chain" id="PRO_0000436830" description="Prenyltransferase vrtC">
    <location>
        <begin position="1"/>
        <end position="483"/>
    </location>
</feature>